<protein>
    <recommendedName>
        <fullName>Putative uncharacterized protein DDB_G0287489</fullName>
    </recommendedName>
</protein>
<name>Y1923_DICDI</name>
<accession>Q54KB9</accession>
<dbReference type="EMBL" id="AAFI02000101">
    <property type="protein sequence ID" value="EAL63710.1"/>
    <property type="molecule type" value="Genomic_DNA"/>
</dbReference>
<dbReference type="RefSeq" id="XP_637202.1">
    <property type="nucleotide sequence ID" value="XM_632110.1"/>
</dbReference>
<dbReference type="SMR" id="Q54KB9"/>
<dbReference type="PaxDb" id="44689-DDB0219232"/>
<dbReference type="EnsemblProtists" id="EAL63710">
    <property type="protein sequence ID" value="EAL63710"/>
    <property type="gene ID" value="DDB_G0287489"/>
</dbReference>
<dbReference type="GeneID" id="8626139"/>
<dbReference type="KEGG" id="ddi:DDB_G0287489"/>
<dbReference type="dictyBase" id="DDB_G0287489"/>
<dbReference type="VEuPathDB" id="AmoebaDB:DDB_G0287489"/>
<dbReference type="HOGENOM" id="CLU_2488103_0_0_1"/>
<dbReference type="InParanoid" id="Q54KB9"/>
<dbReference type="PRO" id="PR:Q54KB9"/>
<dbReference type="Proteomes" id="UP000002195">
    <property type="component" value="Chromosome 5"/>
</dbReference>
<dbReference type="GO" id="GO:0016020">
    <property type="term" value="C:membrane"/>
    <property type="evidence" value="ECO:0007669"/>
    <property type="project" value="UniProtKB-SubCell"/>
</dbReference>
<gene>
    <name type="ORF">DDB_G0287489</name>
</gene>
<reference key="1">
    <citation type="journal article" date="2005" name="Nature">
        <title>The genome of the social amoeba Dictyostelium discoideum.</title>
        <authorList>
            <person name="Eichinger L."/>
            <person name="Pachebat J.A."/>
            <person name="Gloeckner G."/>
            <person name="Rajandream M.A."/>
            <person name="Sucgang R."/>
            <person name="Berriman M."/>
            <person name="Song J."/>
            <person name="Olsen R."/>
            <person name="Szafranski K."/>
            <person name="Xu Q."/>
            <person name="Tunggal B."/>
            <person name="Kummerfeld S."/>
            <person name="Madera M."/>
            <person name="Konfortov B.A."/>
            <person name="Rivero F."/>
            <person name="Bankier A.T."/>
            <person name="Lehmann R."/>
            <person name="Hamlin N."/>
            <person name="Davies R."/>
            <person name="Gaudet P."/>
            <person name="Fey P."/>
            <person name="Pilcher K."/>
            <person name="Chen G."/>
            <person name="Saunders D."/>
            <person name="Sodergren E.J."/>
            <person name="Davis P."/>
            <person name="Kerhornou A."/>
            <person name="Nie X."/>
            <person name="Hall N."/>
            <person name="Anjard C."/>
            <person name="Hemphill L."/>
            <person name="Bason N."/>
            <person name="Farbrother P."/>
            <person name="Desany B."/>
            <person name="Just E."/>
            <person name="Morio T."/>
            <person name="Rost R."/>
            <person name="Churcher C.M."/>
            <person name="Cooper J."/>
            <person name="Haydock S."/>
            <person name="van Driessche N."/>
            <person name="Cronin A."/>
            <person name="Goodhead I."/>
            <person name="Muzny D.M."/>
            <person name="Mourier T."/>
            <person name="Pain A."/>
            <person name="Lu M."/>
            <person name="Harper D."/>
            <person name="Lindsay R."/>
            <person name="Hauser H."/>
            <person name="James K.D."/>
            <person name="Quiles M."/>
            <person name="Madan Babu M."/>
            <person name="Saito T."/>
            <person name="Buchrieser C."/>
            <person name="Wardroper A."/>
            <person name="Felder M."/>
            <person name="Thangavelu M."/>
            <person name="Johnson D."/>
            <person name="Knights A."/>
            <person name="Loulseged H."/>
            <person name="Mungall K.L."/>
            <person name="Oliver K."/>
            <person name="Price C."/>
            <person name="Quail M.A."/>
            <person name="Urushihara H."/>
            <person name="Hernandez J."/>
            <person name="Rabbinowitsch E."/>
            <person name="Steffen D."/>
            <person name="Sanders M."/>
            <person name="Ma J."/>
            <person name="Kohara Y."/>
            <person name="Sharp S."/>
            <person name="Simmonds M.N."/>
            <person name="Spiegler S."/>
            <person name="Tivey A."/>
            <person name="Sugano S."/>
            <person name="White B."/>
            <person name="Walker D."/>
            <person name="Woodward J.R."/>
            <person name="Winckler T."/>
            <person name="Tanaka Y."/>
            <person name="Shaulsky G."/>
            <person name="Schleicher M."/>
            <person name="Weinstock G.M."/>
            <person name="Rosenthal A."/>
            <person name="Cox E.C."/>
            <person name="Chisholm R.L."/>
            <person name="Gibbs R.A."/>
            <person name="Loomis W.F."/>
            <person name="Platzer M."/>
            <person name="Kay R.R."/>
            <person name="Williams J.G."/>
            <person name="Dear P.H."/>
            <person name="Noegel A.A."/>
            <person name="Barrell B.G."/>
            <person name="Kuspa A."/>
        </authorList>
    </citation>
    <scope>NUCLEOTIDE SEQUENCE [LARGE SCALE GENOMIC DNA]</scope>
    <source>
        <strain>AX4</strain>
    </source>
</reference>
<keyword id="KW-0472">Membrane</keyword>
<keyword id="KW-1185">Reference proteome</keyword>
<keyword id="KW-0812">Transmembrane</keyword>
<keyword id="KW-1133">Transmembrane helix</keyword>
<comment type="subcellular location">
    <subcellularLocation>
        <location evidence="2">Membrane</location>
        <topology evidence="2">Single-pass membrane protein</topology>
    </subcellularLocation>
</comment>
<feature type="chain" id="PRO_0000347024" description="Putative uncharacterized protein DDB_G0287489">
    <location>
        <begin position="1"/>
        <end position="87"/>
    </location>
</feature>
<feature type="transmembrane region" description="Helical" evidence="1">
    <location>
        <begin position="63"/>
        <end position="83"/>
    </location>
</feature>
<evidence type="ECO:0000255" key="1"/>
<evidence type="ECO:0000305" key="2"/>
<sequence length="87" mass="9973">MEIENKNIKEIESIITDEIDNSNNIINNNNNGNINEHIINIQNEKKFELVELNPKFLKSPTMIVLALVLGVFSLVGLIFIIYFSIKK</sequence>
<organism>
    <name type="scientific">Dictyostelium discoideum</name>
    <name type="common">Social amoeba</name>
    <dbReference type="NCBI Taxonomy" id="44689"/>
    <lineage>
        <taxon>Eukaryota</taxon>
        <taxon>Amoebozoa</taxon>
        <taxon>Evosea</taxon>
        <taxon>Eumycetozoa</taxon>
        <taxon>Dictyostelia</taxon>
        <taxon>Dictyosteliales</taxon>
        <taxon>Dictyosteliaceae</taxon>
        <taxon>Dictyostelium</taxon>
    </lineage>
</organism>
<proteinExistence type="predicted"/>